<gene>
    <name type="primary">SEMA4F</name>
    <name type="synonym">SEMAM</name>
    <name type="synonym">SEMAW</name>
</gene>
<sequence length="770" mass="83511">MPASAARPRPGPGQPTASPFPLLLLAVLSGPVSGRVPRSVPRTSLPISEADSCLTRFAVPHTYNYSVLLVDPASHTLYVGARDTIFALSLPFSGERPRRIDWMVPEAHRQNCRKKGKKEDECHNFVQILAIANASHLLTCGTFAFDPKCGVIDVSRFQQVERLESGRGKCPFEPAQRSAAVMAGGVLYAATVKNYLGTEPIITRAVGRAEDWIRTDTLPSWLNAPAFVAAVALSPAEWGDEDGDDEIYFFFTETSRAFDSYERIKVPRVARVCAGDLGGRKTLQQRWTTFLKADLLCPGPEHGRASSVLQDVAVLRPELGAGTPIFYGIFSSQWEGATISAVCAFRPQDIRTVLNGPFRELKHDCNRGLPVVDNDVPQPRPGECITNNMKLRHFGSSLSLPDRVLTFIRDHPLMDRPVFPADGHPLLVTTDTAYLRVVAHRVTSLSGKEYDVLYLGTEDGHLHRAVRIGAQLSVLEDLALFPEPQPVENMKLYHSWLLVGSRTEVTQVNTTNCGRLQSCSECILAQDPVCAWSFRLDECVAHAGEHRGLVQDIESADVSSLCPKEPGERPVVFEVPVATAAHVVLPCSPSSAWASCVWHQPSGVTALTPRRDGLEVVVTPGAMGAYACECQEGGAAHVVAAYSLVWGSQRDAPSRAHTVGAGLAGFFLGILAASLTLILIGRRQQRRRQRELLARDKVGLDLGAPPSGTTSYSQDPPSPSPEDERLPLALAKRGSGFGGFSPPFLLDPCPSPAHIRLTGAPLATCDETSI</sequence>
<feature type="signal peptide" evidence="3">
    <location>
        <begin position="1"/>
        <end position="34"/>
    </location>
</feature>
<feature type="chain" id="PRO_0000032330" description="Semaphorin-4F">
    <location>
        <begin position="35"/>
        <end position="770"/>
    </location>
</feature>
<feature type="topological domain" description="Extracellular" evidence="3">
    <location>
        <begin position="35"/>
        <end position="659"/>
    </location>
</feature>
<feature type="transmembrane region" description="Helical" evidence="3">
    <location>
        <begin position="660"/>
        <end position="680"/>
    </location>
</feature>
<feature type="topological domain" description="Cytoplasmic" evidence="3">
    <location>
        <begin position="681"/>
        <end position="770"/>
    </location>
</feature>
<feature type="domain" description="Sema" evidence="4">
    <location>
        <begin position="42"/>
        <end position="510"/>
    </location>
</feature>
<feature type="domain" description="PSI">
    <location>
        <begin position="512"/>
        <end position="563"/>
    </location>
</feature>
<feature type="domain" description="Ig-like C2-type">
    <location>
        <begin position="580"/>
        <end position="635"/>
    </location>
</feature>
<feature type="region of interest" description="Disordered" evidence="5">
    <location>
        <begin position="696"/>
        <end position="725"/>
    </location>
</feature>
<feature type="short sequence motif" description="PDZ-binding" evidence="1">
    <location>
        <begin position="768"/>
        <end position="770"/>
    </location>
</feature>
<feature type="modified residue" description="Phosphoserine" evidence="1">
    <location>
        <position position="718"/>
    </location>
</feature>
<feature type="modified residue" description="Phosphoserine" evidence="1">
    <location>
        <position position="720"/>
    </location>
</feature>
<feature type="glycosylation site" description="N-linked (GlcNAc...) asparagine" evidence="3">
    <location>
        <position position="64"/>
    </location>
</feature>
<feature type="glycosylation site" description="N-linked (GlcNAc...) asparagine" evidence="3">
    <location>
        <position position="133"/>
    </location>
</feature>
<feature type="glycosylation site" description="N-linked (GlcNAc...) asparagine" evidence="3">
    <location>
        <position position="509"/>
    </location>
</feature>
<feature type="disulfide bond" evidence="4">
    <location>
        <begin position="112"/>
        <end position="122"/>
    </location>
</feature>
<feature type="disulfide bond" evidence="4">
    <location>
        <begin position="140"/>
        <end position="149"/>
    </location>
</feature>
<feature type="disulfide bond" evidence="4">
    <location>
        <begin position="273"/>
        <end position="384"/>
    </location>
</feature>
<feature type="disulfide bond" evidence="4">
    <location>
        <begin position="297"/>
        <end position="343"/>
    </location>
</feature>
<feature type="disulfide bond" evidence="4">
    <location>
        <begin position="513"/>
        <end position="530"/>
    </location>
</feature>
<feature type="disulfide bond" evidence="4">
    <location>
        <begin position="522"/>
        <end position="539"/>
    </location>
</feature>
<feature type="disulfide bond" evidence="4">
    <location>
        <begin position="587"/>
        <end position="628"/>
    </location>
</feature>
<feature type="splice variant" id="VSP_006043" description="In isoform Short." evidence="6 7">
    <location>
        <begin position="120"/>
        <end position="274"/>
    </location>
</feature>
<feature type="sequence conflict" description="In Ref. 1; BAA75631." evidence="8" ref="1">
    <original>S</original>
    <variation>N</variation>
    <location>
        <position position="533"/>
    </location>
</feature>
<protein>
    <recommendedName>
        <fullName>Semaphorin-4F</fullName>
    </recommendedName>
    <alternativeName>
        <fullName>Semaphorin-M</fullName>
        <shortName>Sema M</shortName>
    </alternativeName>
    <alternativeName>
        <fullName>Semaphorin-W</fullName>
        <shortName>Sema W</shortName>
    </alternativeName>
</protein>
<keyword id="KW-0025">Alternative splicing</keyword>
<keyword id="KW-1003">Cell membrane</keyword>
<keyword id="KW-0966">Cell projection</keyword>
<keyword id="KW-0217">Developmental protein</keyword>
<keyword id="KW-0221">Differentiation</keyword>
<keyword id="KW-1015">Disulfide bond</keyword>
<keyword id="KW-0325">Glycoprotein</keyword>
<keyword id="KW-0393">Immunoglobulin domain</keyword>
<keyword id="KW-0472">Membrane</keyword>
<keyword id="KW-0524">Neurogenesis</keyword>
<keyword id="KW-0597">Phosphoprotein</keyword>
<keyword id="KW-1267">Proteomics identification</keyword>
<keyword id="KW-1185">Reference proteome</keyword>
<keyword id="KW-0732">Signal</keyword>
<keyword id="KW-0770">Synapse</keyword>
<keyword id="KW-0812">Transmembrane</keyword>
<keyword id="KW-1133">Transmembrane helix</keyword>
<proteinExistence type="evidence at protein level"/>
<name>SEM4F_HUMAN</name>
<evidence type="ECO:0000250" key="1">
    <source>
        <dbReference type="UniProtKB" id="Q9Z123"/>
    </source>
</evidence>
<evidence type="ECO:0000250" key="2">
    <source>
        <dbReference type="UniProtKB" id="Q9Z143"/>
    </source>
</evidence>
<evidence type="ECO:0000255" key="3"/>
<evidence type="ECO:0000255" key="4">
    <source>
        <dbReference type="PROSITE-ProRule" id="PRU00352"/>
    </source>
</evidence>
<evidence type="ECO:0000256" key="5">
    <source>
        <dbReference type="SAM" id="MobiDB-lite"/>
    </source>
</evidence>
<evidence type="ECO:0000303" key="6">
    <source>
    </source>
</evidence>
<evidence type="ECO:0000303" key="7">
    <source>
    </source>
</evidence>
<evidence type="ECO:0000305" key="8"/>
<organism>
    <name type="scientific">Homo sapiens</name>
    <name type="common">Human</name>
    <dbReference type="NCBI Taxonomy" id="9606"/>
    <lineage>
        <taxon>Eukaryota</taxon>
        <taxon>Metazoa</taxon>
        <taxon>Chordata</taxon>
        <taxon>Craniata</taxon>
        <taxon>Vertebrata</taxon>
        <taxon>Euteleostomi</taxon>
        <taxon>Mammalia</taxon>
        <taxon>Eutheria</taxon>
        <taxon>Euarchontoglires</taxon>
        <taxon>Primates</taxon>
        <taxon>Haplorrhini</taxon>
        <taxon>Catarrhini</taxon>
        <taxon>Hominidae</taxon>
        <taxon>Homo</taxon>
    </lineage>
</organism>
<comment type="function">
    <text evidence="1 2">Probable cell surface receptor that regulates oligodendroglial precursor cell migration (By similarity). Might also regulate differentiation of oligodendroglial precursor cells (By similarity). Has growth cone collapse activity against retinal ganglion-cell axons (By similarity).</text>
</comment>
<comment type="subunit">
    <text evidence="1">Interacts (via PDZ-binding motif) with DLG4/SAP90 (via PDZ domain 2); this interaction may promote translocation of DLG4/SAP90 to the membrane.</text>
</comment>
<comment type="subcellular location">
    <subcellularLocation>
        <location evidence="8">Cell membrane</location>
        <topology evidence="3">Single-pass type I membrane protein</topology>
    </subcellularLocation>
    <subcellularLocation>
        <location evidence="2">Postsynaptic density</location>
    </subcellularLocation>
    <subcellularLocation>
        <location evidence="1">Perikaryon</location>
    </subcellularLocation>
    <subcellularLocation>
        <location evidence="1">Cell projection</location>
        <location evidence="1">Dendrite</location>
    </subcellularLocation>
    <text evidence="1">Colocalizes with DLG4 at synapses.</text>
</comment>
<comment type="alternative products">
    <event type="alternative splicing"/>
    <isoform>
        <id>O95754-1</id>
        <name>Long</name>
        <sequence type="displayed"/>
    </isoform>
    <isoform>
        <id>O95754-2</id>
        <name>Short</name>
        <sequence type="described" ref="VSP_006043"/>
    </isoform>
</comment>
<comment type="similarity">
    <text evidence="8">Belongs to the semaphorin family.</text>
</comment>
<dbReference type="EMBL" id="AB022317">
    <property type="protein sequence ID" value="BAA75631.1"/>
    <property type="molecule type" value="mRNA"/>
</dbReference>
<dbReference type="EMBL" id="AL136552">
    <property type="protein sequence ID" value="CAB66487.1"/>
    <property type="molecule type" value="mRNA"/>
</dbReference>
<dbReference type="EMBL" id="AK075384">
    <property type="protein sequence ID" value="BAC11584.1"/>
    <property type="molecule type" value="mRNA"/>
</dbReference>
<dbReference type="EMBL" id="AC006544">
    <property type="status" value="NOT_ANNOTATED_CDS"/>
    <property type="molecule type" value="Genomic_DNA"/>
</dbReference>
<dbReference type="EMBL" id="BC018361">
    <property type="protein sequence ID" value="AAH18361.1"/>
    <property type="molecule type" value="mRNA"/>
</dbReference>
<dbReference type="EMBL" id="BC038411">
    <property type="protein sequence ID" value="AAH38411.1"/>
    <property type="molecule type" value="mRNA"/>
</dbReference>
<dbReference type="EMBL" id="AF053369">
    <property type="protein sequence ID" value="AAF80660.1"/>
    <property type="molecule type" value="mRNA"/>
</dbReference>
<dbReference type="CCDS" id="CCDS1955.1">
    <molecule id="O95754-1"/>
</dbReference>
<dbReference type="CCDS" id="CCDS62942.1">
    <molecule id="O95754-2"/>
</dbReference>
<dbReference type="RefSeq" id="NP_001258590.1">
    <molecule id="O95754-2"/>
    <property type="nucleotide sequence ID" value="NM_001271661.2"/>
</dbReference>
<dbReference type="RefSeq" id="NP_001258591.1">
    <property type="nucleotide sequence ID" value="NM_001271662.1"/>
</dbReference>
<dbReference type="RefSeq" id="NP_004254.2">
    <molecule id="O95754-1"/>
    <property type="nucleotide sequence ID" value="NM_004263.4"/>
</dbReference>
<dbReference type="SMR" id="O95754"/>
<dbReference type="BioGRID" id="115764">
    <property type="interactions" value="52"/>
</dbReference>
<dbReference type="FunCoup" id="O95754">
    <property type="interactions" value="793"/>
</dbReference>
<dbReference type="IntAct" id="O95754">
    <property type="interactions" value="27"/>
</dbReference>
<dbReference type="STRING" id="9606.ENSP00000350547"/>
<dbReference type="GlyCosmos" id="O95754">
    <property type="glycosylation" value="3 sites, No reported glycans"/>
</dbReference>
<dbReference type="GlyGen" id="O95754">
    <property type="glycosylation" value="3 sites, 2 N-linked glycans (2 sites)"/>
</dbReference>
<dbReference type="iPTMnet" id="O95754"/>
<dbReference type="PhosphoSitePlus" id="O95754"/>
<dbReference type="BioMuta" id="SEMA4F"/>
<dbReference type="jPOST" id="O95754"/>
<dbReference type="MassIVE" id="O95754"/>
<dbReference type="PaxDb" id="9606-ENSP00000350547"/>
<dbReference type="PeptideAtlas" id="O95754"/>
<dbReference type="ProteomicsDB" id="51023">
    <molecule id="O95754-1"/>
</dbReference>
<dbReference type="ProteomicsDB" id="51024">
    <molecule id="O95754-2"/>
</dbReference>
<dbReference type="Antibodypedia" id="47483">
    <property type="antibodies" value="158 antibodies from 25 providers"/>
</dbReference>
<dbReference type="DNASU" id="10505"/>
<dbReference type="Ensembl" id="ENST00000339773.9">
    <molecule id="O95754-2"/>
    <property type="protein sequence ID" value="ENSP00000342675.5"/>
    <property type="gene ID" value="ENSG00000135622.14"/>
</dbReference>
<dbReference type="Ensembl" id="ENST00000357877.7">
    <molecule id="O95754-1"/>
    <property type="protein sequence ID" value="ENSP00000350547.2"/>
    <property type="gene ID" value="ENSG00000135622.14"/>
</dbReference>
<dbReference type="GeneID" id="10505"/>
<dbReference type="KEGG" id="hsa:10505"/>
<dbReference type="MANE-Select" id="ENST00000357877.7">
    <property type="protein sequence ID" value="ENSP00000350547.2"/>
    <property type="RefSeq nucleotide sequence ID" value="NM_004263.5"/>
    <property type="RefSeq protein sequence ID" value="NP_004254.2"/>
</dbReference>
<dbReference type="UCSC" id="uc002sna.3">
    <molecule id="O95754-1"/>
    <property type="organism name" value="human"/>
</dbReference>
<dbReference type="AGR" id="HGNC:10734"/>
<dbReference type="CTD" id="10505"/>
<dbReference type="DisGeNET" id="10505"/>
<dbReference type="GeneCards" id="SEMA4F"/>
<dbReference type="HGNC" id="HGNC:10734">
    <property type="gene designation" value="SEMA4F"/>
</dbReference>
<dbReference type="HPA" id="ENSG00000135622">
    <property type="expression patterns" value="Low tissue specificity"/>
</dbReference>
<dbReference type="MIM" id="603706">
    <property type="type" value="gene"/>
</dbReference>
<dbReference type="neXtProt" id="NX_O95754"/>
<dbReference type="OpenTargets" id="ENSG00000135622"/>
<dbReference type="PharmGKB" id="PA35656"/>
<dbReference type="VEuPathDB" id="HostDB:ENSG00000135622"/>
<dbReference type="eggNOG" id="KOG3611">
    <property type="taxonomic scope" value="Eukaryota"/>
</dbReference>
<dbReference type="GeneTree" id="ENSGT00940000159592"/>
<dbReference type="HOGENOM" id="CLU_009051_6_0_1"/>
<dbReference type="InParanoid" id="O95754"/>
<dbReference type="OMA" id="APLAKCE"/>
<dbReference type="OrthoDB" id="9988752at2759"/>
<dbReference type="PAN-GO" id="O95754">
    <property type="GO annotations" value="10 GO annotations based on evolutionary models"/>
</dbReference>
<dbReference type="PhylomeDB" id="O95754"/>
<dbReference type="TreeFam" id="TF352903"/>
<dbReference type="PathwayCommons" id="O95754"/>
<dbReference type="Reactome" id="R-HSA-9696264">
    <property type="pathway name" value="RND3 GTPase cycle"/>
</dbReference>
<dbReference type="SignaLink" id="O95754"/>
<dbReference type="BioGRID-ORCS" id="10505">
    <property type="hits" value="12 hits in 1152 CRISPR screens"/>
</dbReference>
<dbReference type="GeneWiki" id="SEMA4F"/>
<dbReference type="GenomeRNAi" id="10505"/>
<dbReference type="Pharos" id="O95754">
    <property type="development level" value="Tbio"/>
</dbReference>
<dbReference type="PRO" id="PR:O95754"/>
<dbReference type="Proteomes" id="UP000005640">
    <property type="component" value="Chromosome 2"/>
</dbReference>
<dbReference type="RNAct" id="O95754">
    <property type="molecule type" value="protein"/>
</dbReference>
<dbReference type="Bgee" id="ENSG00000135622">
    <property type="expression patterns" value="Expressed in endothelial cell and 141 other cell types or tissues"/>
</dbReference>
<dbReference type="ExpressionAtlas" id="O95754">
    <property type="expression patterns" value="baseline and differential"/>
</dbReference>
<dbReference type="GO" id="GO:0030425">
    <property type="term" value="C:dendrite"/>
    <property type="evidence" value="ECO:0007669"/>
    <property type="project" value="UniProtKB-SubCell"/>
</dbReference>
<dbReference type="GO" id="GO:0005783">
    <property type="term" value="C:endoplasmic reticulum"/>
    <property type="evidence" value="ECO:0000314"/>
    <property type="project" value="LIFEdb"/>
</dbReference>
<dbReference type="GO" id="GO:0098978">
    <property type="term" value="C:glutamatergic synapse"/>
    <property type="evidence" value="ECO:0007669"/>
    <property type="project" value="Ensembl"/>
</dbReference>
<dbReference type="GO" id="GO:0016020">
    <property type="term" value="C:membrane"/>
    <property type="evidence" value="ECO:0000304"/>
    <property type="project" value="ProtInc"/>
</dbReference>
<dbReference type="GO" id="GO:0043204">
    <property type="term" value="C:perikaryon"/>
    <property type="evidence" value="ECO:0007669"/>
    <property type="project" value="UniProtKB-SubCell"/>
</dbReference>
<dbReference type="GO" id="GO:0005886">
    <property type="term" value="C:plasma membrane"/>
    <property type="evidence" value="ECO:0000318"/>
    <property type="project" value="GO_Central"/>
</dbReference>
<dbReference type="GO" id="GO:0098839">
    <property type="term" value="C:postsynaptic density membrane"/>
    <property type="evidence" value="ECO:0007669"/>
    <property type="project" value="Ensembl"/>
</dbReference>
<dbReference type="GO" id="GO:0045499">
    <property type="term" value="F:chemorepellent activity"/>
    <property type="evidence" value="ECO:0000318"/>
    <property type="project" value="GO_Central"/>
</dbReference>
<dbReference type="GO" id="GO:0038191">
    <property type="term" value="F:neuropilin binding"/>
    <property type="evidence" value="ECO:0000318"/>
    <property type="project" value="GO_Central"/>
</dbReference>
<dbReference type="GO" id="GO:0030215">
    <property type="term" value="F:semaphorin receptor binding"/>
    <property type="evidence" value="ECO:0000318"/>
    <property type="project" value="GO_Central"/>
</dbReference>
<dbReference type="GO" id="GO:0007411">
    <property type="term" value="P:axon guidance"/>
    <property type="evidence" value="ECO:0000318"/>
    <property type="project" value="GO_Central"/>
</dbReference>
<dbReference type="GO" id="GO:0007267">
    <property type="term" value="P:cell-cell signaling"/>
    <property type="evidence" value="ECO:0000304"/>
    <property type="project" value="ProtInc"/>
</dbReference>
<dbReference type="GO" id="GO:0050919">
    <property type="term" value="P:negative chemotaxis"/>
    <property type="evidence" value="ECO:0000318"/>
    <property type="project" value="GO_Central"/>
</dbReference>
<dbReference type="GO" id="GO:0030517">
    <property type="term" value="P:negative regulation of axon extension"/>
    <property type="evidence" value="ECO:0007669"/>
    <property type="project" value="Ensembl"/>
</dbReference>
<dbReference type="GO" id="GO:0007399">
    <property type="term" value="P:nervous system development"/>
    <property type="evidence" value="ECO:0000304"/>
    <property type="project" value="ProtInc"/>
</dbReference>
<dbReference type="GO" id="GO:0001755">
    <property type="term" value="P:neural crest cell migration"/>
    <property type="evidence" value="ECO:0000318"/>
    <property type="project" value="GO_Central"/>
</dbReference>
<dbReference type="GO" id="GO:0030335">
    <property type="term" value="P:positive regulation of cell migration"/>
    <property type="evidence" value="ECO:0000318"/>
    <property type="project" value="GO_Central"/>
</dbReference>
<dbReference type="GO" id="GO:0031290">
    <property type="term" value="P:retinal ganglion cell axon guidance"/>
    <property type="evidence" value="ECO:0007669"/>
    <property type="project" value="Ensembl"/>
</dbReference>
<dbReference type="GO" id="GO:0071526">
    <property type="term" value="P:semaphorin-plexin signaling pathway"/>
    <property type="evidence" value="ECO:0000318"/>
    <property type="project" value="GO_Central"/>
</dbReference>
<dbReference type="CDD" id="cd11261">
    <property type="entry name" value="Sema_4F"/>
    <property type="match status" value="1"/>
</dbReference>
<dbReference type="FunFam" id="2.130.10.10:FF:000351">
    <property type="entry name" value="semaphorin-4F isoform X1"/>
    <property type="match status" value="1"/>
</dbReference>
<dbReference type="FunFam" id="3.30.1680.10:FF:000010">
    <property type="entry name" value="semaphorin-4F isoform X1"/>
    <property type="match status" value="1"/>
</dbReference>
<dbReference type="Gene3D" id="3.30.1680.10">
    <property type="entry name" value="ligand-binding face of the semaphorins, domain 2"/>
    <property type="match status" value="1"/>
</dbReference>
<dbReference type="Gene3D" id="2.130.10.10">
    <property type="entry name" value="YVTN repeat-like/Quinoprotein amine dehydrogenase"/>
    <property type="match status" value="1"/>
</dbReference>
<dbReference type="InterPro" id="IPR002165">
    <property type="entry name" value="Plexin_repeat"/>
</dbReference>
<dbReference type="InterPro" id="IPR016201">
    <property type="entry name" value="PSI"/>
</dbReference>
<dbReference type="InterPro" id="IPR047085">
    <property type="entry name" value="Sem4F_Sema_dom"/>
</dbReference>
<dbReference type="InterPro" id="IPR045791">
    <property type="entry name" value="Sema4F_C"/>
</dbReference>
<dbReference type="InterPro" id="IPR001627">
    <property type="entry name" value="Semap_dom"/>
</dbReference>
<dbReference type="InterPro" id="IPR036352">
    <property type="entry name" value="Semap_dom_sf"/>
</dbReference>
<dbReference type="InterPro" id="IPR027231">
    <property type="entry name" value="Semaphorin"/>
</dbReference>
<dbReference type="InterPro" id="IPR015943">
    <property type="entry name" value="WD40/YVTN_repeat-like_dom_sf"/>
</dbReference>
<dbReference type="PANTHER" id="PTHR11036">
    <property type="entry name" value="SEMAPHORIN"/>
    <property type="match status" value="1"/>
</dbReference>
<dbReference type="PANTHER" id="PTHR11036:SF72">
    <property type="entry name" value="SEMAPHORIN-4F"/>
    <property type="match status" value="1"/>
</dbReference>
<dbReference type="Pfam" id="PF01437">
    <property type="entry name" value="PSI"/>
    <property type="match status" value="1"/>
</dbReference>
<dbReference type="Pfam" id="PF01403">
    <property type="entry name" value="Sema"/>
    <property type="match status" value="1"/>
</dbReference>
<dbReference type="Pfam" id="PF19428">
    <property type="entry name" value="Sema4F_C"/>
    <property type="match status" value="1"/>
</dbReference>
<dbReference type="SMART" id="SM00423">
    <property type="entry name" value="PSI"/>
    <property type="match status" value="1"/>
</dbReference>
<dbReference type="SMART" id="SM00630">
    <property type="entry name" value="Sema"/>
    <property type="match status" value="1"/>
</dbReference>
<dbReference type="SUPFAM" id="SSF103575">
    <property type="entry name" value="Plexin repeat"/>
    <property type="match status" value="1"/>
</dbReference>
<dbReference type="SUPFAM" id="SSF101912">
    <property type="entry name" value="Sema domain"/>
    <property type="match status" value="1"/>
</dbReference>
<dbReference type="PROSITE" id="PS51004">
    <property type="entry name" value="SEMA"/>
    <property type="match status" value="1"/>
</dbReference>
<reference key="1">
    <citation type="journal article" date="1999" name="Proc. Natl. Acad. Sci. U.S.A.">
        <title>Cloning, expression, and genetic mapping of Sema W, a member of the semaphorin family.</title>
        <authorList>
            <person name="Encinas J.A."/>
            <person name="Kikuchi K."/>
            <person name="Chedotal A."/>
            <person name="de Castro F."/>
            <person name="Goodman C.S."/>
            <person name="Kimura T."/>
        </authorList>
    </citation>
    <scope>NUCLEOTIDE SEQUENCE [MRNA] (ISOFORM SHORT)</scope>
    <source>
        <tissue>Brain</tissue>
    </source>
</reference>
<reference key="2">
    <citation type="journal article" date="2001" name="Genome Res.">
        <title>Towards a catalog of human genes and proteins: sequencing and analysis of 500 novel complete protein coding human cDNAs.</title>
        <authorList>
            <person name="Wiemann S."/>
            <person name="Weil B."/>
            <person name="Wellenreuther R."/>
            <person name="Gassenhuber J."/>
            <person name="Glassl S."/>
            <person name="Ansorge W."/>
            <person name="Boecher M."/>
            <person name="Bloecker H."/>
            <person name="Bauersachs S."/>
            <person name="Blum H."/>
            <person name="Lauber J."/>
            <person name="Duesterhoeft A."/>
            <person name="Beyer A."/>
            <person name="Koehrer K."/>
            <person name="Strack N."/>
            <person name="Mewes H.-W."/>
            <person name="Ottenwaelder B."/>
            <person name="Obermaier B."/>
            <person name="Tampe J."/>
            <person name="Heubner D."/>
            <person name="Wambutt R."/>
            <person name="Korn B."/>
            <person name="Klein M."/>
            <person name="Poustka A."/>
        </authorList>
    </citation>
    <scope>NUCLEOTIDE SEQUENCE [LARGE SCALE MRNA] (ISOFORM LONG)</scope>
    <source>
        <tissue>Amygdala</tissue>
    </source>
</reference>
<reference key="3">
    <citation type="journal article" date="2005" name="DNA Res.">
        <title>Signal sequence and keyword trap in silico for selection of full-length human cDNAs encoding secretion or membrane proteins from oligo-capped cDNA libraries.</title>
        <authorList>
            <person name="Otsuki T."/>
            <person name="Ota T."/>
            <person name="Nishikawa T."/>
            <person name="Hayashi K."/>
            <person name="Suzuki Y."/>
            <person name="Yamamoto J."/>
            <person name="Wakamatsu A."/>
            <person name="Kimura K."/>
            <person name="Sakamoto K."/>
            <person name="Hatano N."/>
            <person name="Kawai Y."/>
            <person name="Ishii S."/>
            <person name="Saito K."/>
            <person name="Kojima S."/>
            <person name="Sugiyama T."/>
            <person name="Ono T."/>
            <person name="Okano K."/>
            <person name="Yoshikawa Y."/>
            <person name="Aotsuka S."/>
            <person name="Sasaki N."/>
            <person name="Hattori A."/>
            <person name="Okumura K."/>
            <person name="Nagai K."/>
            <person name="Sugano S."/>
            <person name="Isogai T."/>
        </authorList>
    </citation>
    <scope>NUCLEOTIDE SEQUENCE [LARGE SCALE MRNA] (ISOFORM LONG)</scope>
</reference>
<reference key="4">
    <citation type="journal article" date="2005" name="Nature">
        <title>Generation and annotation of the DNA sequences of human chromosomes 2 and 4.</title>
        <authorList>
            <person name="Hillier L.W."/>
            <person name="Graves T.A."/>
            <person name="Fulton R.S."/>
            <person name="Fulton L.A."/>
            <person name="Pepin K.H."/>
            <person name="Minx P."/>
            <person name="Wagner-McPherson C."/>
            <person name="Layman D."/>
            <person name="Wylie K."/>
            <person name="Sekhon M."/>
            <person name="Becker M.C."/>
            <person name="Fewell G.A."/>
            <person name="Delehaunty K.D."/>
            <person name="Miner T.L."/>
            <person name="Nash W.E."/>
            <person name="Kremitzki C."/>
            <person name="Oddy L."/>
            <person name="Du H."/>
            <person name="Sun H."/>
            <person name="Bradshaw-Cordum H."/>
            <person name="Ali J."/>
            <person name="Carter J."/>
            <person name="Cordes M."/>
            <person name="Harris A."/>
            <person name="Isak A."/>
            <person name="van Brunt A."/>
            <person name="Nguyen C."/>
            <person name="Du F."/>
            <person name="Courtney L."/>
            <person name="Kalicki J."/>
            <person name="Ozersky P."/>
            <person name="Abbott S."/>
            <person name="Armstrong J."/>
            <person name="Belter E.A."/>
            <person name="Caruso L."/>
            <person name="Cedroni M."/>
            <person name="Cotton M."/>
            <person name="Davidson T."/>
            <person name="Desai A."/>
            <person name="Elliott G."/>
            <person name="Erb T."/>
            <person name="Fronick C."/>
            <person name="Gaige T."/>
            <person name="Haakenson W."/>
            <person name="Haglund K."/>
            <person name="Holmes A."/>
            <person name="Harkins R."/>
            <person name="Kim K."/>
            <person name="Kruchowski S.S."/>
            <person name="Strong C.M."/>
            <person name="Grewal N."/>
            <person name="Goyea E."/>
            <person name="Hou S."/>
            <person name="Levy A."/>
            <person name="Martinka S."/>
            <person name="Mead K."/>
            <person name="McLellan M.D."/>
            <person name="Meyer R."/>
            <person name="Randall-Maher J."/>
            <person name="Tomlinson C."/>
            <person name="Dauphin-Kohlberg S."/>
            <person name="Kozlowicz-Reilly A."/>
            <person name="Shah N."/>
            <person name="Swearengen-Shahid S."/>
            <person name="Snider J."/>
            <person name="Strong J.T."/>
            <person name="Thompson J."/>
            <person name="Yoakum M."/>
            <person name="Leonard S."/>
            <person name="Pearman C."/>
            <person name="Trani L."/>
            <person name="Radionenko M."/>
            <person name="Waligorski J.E."/>
            <person name="Wang C."/>
            <person name="Rock S.M."/>
            <person name="Tin-Wollam A.-M."/>
            <person name="Maupin R."/>
            <person name="Latreille P."/>
            <person name="Wendl M.C."/>
            <person name="Yang S.-P."/>
            <person name="Pohl C."/>
            <person name="Wallis J.W."/>
            <person name="Spieth J."/>
            <person name="Bieri T.A."/>
            <person name="Berkowicz N."/>
            <person name="Nelson J.O."/>
            <person name="Osborne J."/>
            <person name="Ding L."/>
            <person name="Meyer R."/>
            <person name="Sabo A."/>
            <person name="Shotland Y."/>
            <person name="Sinha P."/>
            <person name="Wohldmann P.E."/>
            <person name="Cook L.L."/>
            <person name="Hickenbotham M.T."/>
            <person name="Eldred J."/>
            <person name="Williams D."/>
            <person name="Jones T.A."/>
            <person name="She X."/>
            <person name="Ciccarelli F.D."/>
            <person name="Izaurralde E."/>
            <person name="Taylor J."/>
            <person name="Schmutz J."/>
            <person name="Myers R.M."/>
            <person name="Cox D.R."/>
            <person name="Huang X."/>
            <person name="McPherson J.D."/>
            <person name="Mardis E.R."/>
            <person name="Clifton S.W."/>
            <person name="Warren W.C."/>
            <person name="Chinwalla A.T."/>
            <person name="Eddy S.R."/>
            <person name="Marra M.A."/>
            <person name="Ovcharenko I."/>
            <person name="Furey T.S."/>
            <person name="Miller W."/>
            <person name="Eichler E.E."/>
            <person name="Bork P."/>
            <person name="Suyama M."/>
            <person name="Torrents D."/>
            <person name="Waterston R.H."/>
            <person name="Wilson R.K."/>
        </authorList>
    </citation>
    <scope>NUCLEOTIDE SEQUENCE [LARGE SCALE GENOMIC DNA]</scope>
</reference>
<reference key="5">
    <citation type="journal article" date="2004" name="Genome Res.">
        <title>The status, quality, and expansion of the NIH full-length cDNA project: the Mammalian Gene Collection (MGC).</title>
        <authorList>
            <consortium name="The MGC Project Team"/>
        </authorList>
    </citation>
    <scope>NUCLEOTIDE SEQUENCE [LARGE SCALE MRNA] (ISOFORMS LONG AND SHORT)</scope>
    <source>
        <tissue>Brain</tissue>
    </source>
</reference>
<reference key="6">
    <citation type="submission" date="1998-03" db="EMBL/GenBank/DDBJ databases">
        <title>Large-scale comparative sequence analysis of human and mouse genomic DNA in the mnd2 region of mouse chromosome 6 reveals coding regions of three new genes.</title>
        <authorList>
            <person name="Jang W."/>
            <person name="Spilson S.V."/>
            <person name="Hua A."/>
            <person name="Roe B."/>
            <person name="Meisler M.H."/>
        </authorList>
    </citation>
    <scope>NUCLEOTIDE SEQUENCE [MRNA] OF 347-770</scope>
</reference>
<accession>O95754</accession>
<accession>Q542Y7</accession>
<accession>Q9NS35</accession>